<protein>
    <recommendedName>
        <fullName evidence="3">Small ribosomal subunit protein uS4c</fullName>
    </recommendedName>
    <alternativeName>
        <fullName>30S ribosomal protein S4, chloroplastic</fullName>
    </alternativeName>
</protein>
<organism>
    <name type="scientific">Hymenocallis littoralis</name>
    <name type="common">Beach spider-lily</name>
    <name type="synonym">Pancratium littorale</name>
    <dbReference type="NCBI Taxonomy" id="59040"/>
    <lineage>
        <taxon>Eukaryota</taxon>
        <taxon>Viridiplantae</taxon>
        <taxon>Streptophyta</taxon>
        <taxon>Embryophyta</taxon>
        <taxon>Tracheophyta</taxon>
        <taxon>Spermatophyta</taxon>
        <taxon>Magnoliopsida</taxon>
        <taxon>Liliopsida</taxon>
        <taxon>Asparagales</taxon>
        <taxon>Amaryllidaceae</taxon>
        <taxon>Amaryllidoideae</taxon>
        <taxon>Hymenocallis</taxon>
    </lineage>
</organism>
<evidence type="ECO:0000250" key="1"/>
<evidence type="ECO:0000256" key="2">
    <source>
        <dbReference type="SAM" id="MobiDB-lite"/>
    </source>
</evidence>
<evidence type="ECO:0000305" key="3"/>
<reference key="1">
    <citation type="journal article" date="1997" name="Plant Syst. Evol.">
        <title>Phylogenetic analysis of Iridaceae with parsimony and distance methods using the plastid gene rps4.</title>
        <authorList>
            <person name="Souza-Chies T.T."/>
            <person name="Bittar G."/>
            <person name="Nadot S."/>
            <person name="Carter L."/>
            <person name="Besin E."/>
            <person name="Lejeune B.P."/>
        </authorList>
    </citation>
    <scope>NUCLEOTIDE SEQUENCE [GENOMIC DNA]</scope>
</reference>
<gene>
    <name type="primary">rps4</name>
</gene>
<proteinExistence type="inferred from homology"/>
<name>RR4_HYMLI</name>
<comment type="function">
    <text evidence="1">One of the primary rRNA binding proteins, it binds directly to 16S rRNA where it nucleates assembly of the body of the 30S subunit.</text>
</comment>
<comment type="function">
    <text evidence="1">With S5 and S12 plays an important role in translational accuracy.</text>
</comment>
<comment type="subunit">
    <text evidence="1">Part of the 30S ribosomal subunit. Contacts protein S5. The interaction surface between S4 and S5 is involved in control of translational fidelity (By similarity).</text>
</comment>
<comment type="subcellular location">
    <subcellularLocation>
        <location>Plastid</location>
        <location>Chloroplast</location>
    </subcellularLocation>
</comment>
<comment type="similarity">
    <text evidence="3">Belongs to the universal ribosomal protein uS4 family.</text>
</comment>
<geneLocation type="chloroplast"/>
<keyword id="KW-0150">Chloroplast</keyword>
<keyword id="KW-0934">Plastid</keyword>
<keyword id="KW-0687">Ribonucleoprotein</keyword>
<keyword id="KW-0689">Ribosomal protein</keyword>
<keyword id="KW-0694">RNA-binding</keyword>
<keyword id="KW-0699">rRNA-binding</keyword>
<sequence>RFKKIRRLGALPGFTSKRPRSGSDLKNPLRSGKRSQYRIRLEEKQKLRFHYGLTERQLLRYVQIARKAKGSTGQVLLQLLEMRLDNILFRLGMASTIPGARQLVNHRHILVNGRIVDIPSYRCKPRDIITTKDKQRSKALIQNSIASAPREELPNHLTIDSFQYKGLVNQIIDSKWIGLKIN</sequence>
<dbReference type="EMBL" id="Z68251">
    <property type="protein sequence ID" value="CAA92549.1"/>
    <property type="molecule type" value="Genomic_DNA"/>
</dbReference>
<dbReference type="SMR" id="O20230"/>
<dbReference type="GO" id="GO:0009507">
    <property type="term" value="C:chloroplast"/>
    <property type="evidence" value="ECO:0007669"/>
    <property type="project" value="UniProtKB-SubCell"/>
</dbReference>
<dbReference type="GO" id="GO:0015935">
    <property type="term" value="C:small ribosomal subunit"/>
    <property type="evidence" value="ECO:0007669"/>
    <property type="project" value="InterPro"/>
</dbReference>
<dbReference type="GO" id="GO:0019843">
    <property type="term" value="F:rRNA binding"/>
    <property type="evidence" value="ECO:0007669"/>
    <property type="project" value="UniProtKB-KW"/>
</dbReference>
<dbReference type="GO" id="GO:0003735">
    <property type="term" value="F:structural constituent of ribosome"/>
    <property type="evidence" value="ECO:0007669"/>
    <property type="project" value="InterPro"/>
</dbReference>
<dbReference type="GO" id="GO:0042274">
    <property type="term" value="P:ribosomal small subunit biogenesis"/>
    <property type="evidence" value="ECO:0007669"/>
    <property type="project" value="TreeGrafter"/>
</dbReference>
<dbReference type="GO" id="GO:0006412">
    <property type="term" value="P:translation"/>
    <property type="evidence" value="ECO:0007669"/>
    <property type="project" value="InterPro"/>
</dbReference>
<dbReference type="CDD" id="cd00165">
    <property type="entry name" value="S4"/>
    <property type="match status" value="1"/>
</dbReference>
<dbReference type="FunFam" id="1.10.1050.10:FF:000002">
    <property type="entry name" value="30S ribosomal protein S4, chloroplastic"/>
    <property type="match status" value="1"/>
</dbReference>
<dbReference type="FunFam" id="3.10.290.10:FF:000081">
    <property type="entry name" value="30S ribosomal protein S4, chloroplastic"/>
    <property type="match status" value="1"/>
</dbReference>
<dbReference type="Gene3D" id="1.10.1050.10">
    <property type="entry name" value="Ribosomal Protein S4 Delta 41, Chain A, domain 1"/>
    <property type="match status" value="1"/>
</dbReference>
<dbReference type="Gene3D" id="3.10.290.10">
    <property type="entry name" value="RNA-binding S4 domain"/>
    <property type="match status" value="1"/>
</dbReference>
<dbReference type="HAMAP" id="MF_01306_B">
    <property type="entry name" value="Ribosomal_uS4_B"/>
    <property type="match status" value="1"/>
</dbReference>
<dbReference type="InterPro" id="IPR022801">
    <property type="entry name" value="Ribosomal_uS4"/>
</dbReference>
<dbReference type="InterPro" id="IPR005709">
    <property type="entry name" value="Ribosomal_uS4_bac-type"/>
</dbReference>
<dbReference type="InterPro" id="IPR018079">
    <property type="entry name" value="Ribosomal_uS4_CS"/>
</dbReference>
<dbReference type="InterPro" id="IPR001912">
    <property type="entry name" value="Ribosomal_uS4_N"/>
</dbReference>
<dbReference type="InterPro" id="IPR002942">
    <property type="entry name" value="S4_RNA-bd"/>
</dbReference>
<dbReference type="InterPro" id="IPR036986">
    <property type="entry name" value="S4_RNA-bd_sf"/>
</dbReference>
<dbReference type="NCBIfam" id="NF003717">
    <property type="entry name" value="PRK05327.1"/>
    <property type="match status" value="1"/>
</dbReference>
<dbReference type="NCBIfam" id="TIGR01017">
    <property type="entry name" value="rpsD_bact"/>
    <property type="match status" value="1"/>
</dbReference>
<dbReference type="PANTHER" id="PTHR11831">
    <property type="entry name" value="30S 40S RIBOSOMAL PROTEIN"/>
    <property type="match status" value="1"/>
</dbReference>
<dbReference type="PANTHER" id="PTHR11831:SF4">
    <property type="entry name" value="SMALL RIBOSOMAL SUBUNIT PROTEIN US4M"/>
    <property type="match status" value="1"/>
</dbReference>
<dbReference type="Pfam" id="PF00163">
    <property type="entry name" value="Ribosomal_S4"/>
    <property type="match status" value="1"/>
</dbReference>
<dbReference type="Pfam" id="PF01479">
    <property type="entry name" value="S4"/>
    <property type="match status" value="1"/>
</dbReference>
<dbReference type="SMART" id="SM01390">
    <property type="entry name" value="Ribosomal_S4"/>
    <property type="match status" value="1"/>
</dbReference>
<dbReference type="SMART" id="SM00363">
    <property type="entry name" value="S4"/>
    <property type="match status" value="1"/>
</dbReference>
<dbReference type="SUPFAM" id="SSF55174">
    <property type="entry name" value="Alpha-L RNA-binding motif"/>
    <property type="match status" value="1"/>
</dbReference>
<dbReference type="PROSITE" id="PS00632">
    <property type="entry name" value="RIBOSOMAL_S4"/>
    <property type="match status" value="1"/>
</dbReference>
<dbReference type="PROSITE" id="PS50889">
    <property type="entry name" value="S4"/>
    <property type="match status" value="1"/>
</dbReference>
<accession>O20230</accession>
<feature type="chain" id="PRO_0000132604" description="Small ribosomal subunit protein uS4c">
    <location>
        <begin position="1" status="less than"/>
        <end position="182" status="greater than"/>
    </location>
</feature>
<feature type="domain" description="S4 RNA-binding">
    <location>
        <begin position="82"/>
        <end position="143"/>
    </location>
</feature>
<feature type="region of interest" description="Disordered" evidence="2">
    <location>
        <begin position="12"/>
        <end position="31"/>
    </location>
</feature>
<feature type="non-terminal residue">
    <location>
        <position position="1"/>
    </location>
</feature>
<feature type="non-terminal residue">
    <location>
        <position position="182"/>
    </location>
</feature>